<feature type="chain" id="PRO_1000201362" description="Carboxy-S-adenosyl-L-methionine synthase">
    <location>
        <begin position="1"/>
        <end position="247"/>
    </location>
</feature>
<feature type="binding site" evidence="1">
    <location>
        <position position="39"/>
    </location>
    <ligand>
        <name>S-adenosyl-L-methionine</name>
        <dbReference type="ChEBI" id="CHEBI:59789"/>
    </ligand>
</feature>
<feature type="binding site" evidence="1">
    <location>
        <begin position="64"/>
        <end position="66"/>
    </location>
    <ligand>
        <name>S-adenosyl-L-methionine</name>
        <dbReference type="ChEBI" id="CHEBI:59789"/>
    </ligand>
</feature>
<feature type="binding site" evidence="1">
    <location>
        <begin position="89"/>
        <end position="90"/>
    </location>
    <ligand>
        <name>S-adenosyl-L-methionine</name>
        <dbReference type="ChEBI" id="CHEBI:59789"/>
    </ligand>
</feature>
<feature type="binding site" evidence="1">
    <location>
        <begin position="117"/>
        <end position="118"/>
    </location>
    <ligand>
        <name>S-adenosyl-L-methionine</name>
        <dbReference type="ChEBI" id="CHEBI:59789"/>
    </ligand>
</feature>
<feature type="binding site" evidence="1">
    <location>
        <position position="132"/>
    </location>
    <ligand>
        <name>S-adenosyl-L-methionine</name>
        <dbReference type="ChEBI" id="CHEBI:59789"/>
    </ligand>
</feature>
<feature type="binding site" evidence="1">
    <location>
        <position position="199"/>
    </location>
    <ligand>
        <name>S-adenosyl-L-methionine</name>
        <dbReference type="ChEBI" id="CHEBI:59789"/>
    </ligand>
</feature>
<sequence length="247" mass="27848">MSHRDTLFSAPIARLGDWTFDERVAEVFPDMIQRSVPGYSNIISMIGMLAERFVQPNTQVYDLGCSLGAATLSVRRNIRHEHCRIIAVDNSPAMIERCRRHIDAYKAPTPVEVVEGDIRDITIENASMVVLNFTLQFLEPAERQALLDKIYLGLNPGGALVLSEKFSFEDAKVGELLFNMHHDFKRANGYSELEISQKRSMLENVMLTDSVETHKARLRQAGFEHSELWFQCFNFGSLVALKAGVAA</sequence>
<accession>B5FSM6</accession>
<keyword id="KW-0949">S-adenosyl-L-methionine</keyword>
<keyword id="KW-0808">Transferase</keyword>
<reference key="1">
    <citation type="journal article" date="2011" name="J. Bacteriol.">
        <title>Comparative genomics of 28 Salmonella enterica isolates: evidence for CRISPR-mediated adaptive sublineage evolution.</title>
        <authorList>
            <person name="Fricke W.F."/>
            <person name="Mammel M.K."/>
            <person name="McDermott P.F."/>
            <person name="Tartera C."/>
            <person name="White D.G."/>
            <person name="Leclerc J.E."/>
            <person name="Ravel J."/>
            <person name="Cebula T.A."/>
        </authorList>
    </citation>
    <scope>NUCLEOTIDE SEQUENCE [LARGE SCALE GENOMIC DNA]</scope>
    <source>
        <strain>CT_02021853</strain>
    </source>
</reference>
<comment type="function">
    <text evidence="1">Catalyzes the conversion of S-adenosyl-L-methionine (SAM) to carboxy-S-adenosyl-L-methionine (Cx-SAM).</text>
</comment>
<comment type="catalytic activity">
    <reaction evidence="1">
        <text>prephenate + S-adenosyl-L-methionine = carboxy-S-adenosyl-L-methionine + 3-phenylpyruvate + H2O</text>
        <dbReference type="Rhea" id="RHEA:51692"/>
        <dbReference type="ChEBI" id="CHEBI:15377"/>
        <dbReference type="ChEBI" id="CHEBI:18005"/>
        <dbReference type="ChEBI" id="CHEBI:29934"/>
        <dbReference type="ChEBI" id="CHEBI:59789"/>
        <dbReference type="ChEBI" id="CHEBI:134278"/>
    </reaction>
</comment>
<comment type="subunit">
    <text evidence="1">Homodimer.</text>
</comment>
<comment type="similarity">
    <text evidence="1">Belongs to the class I-like SAM-binding methyltransferase superfamily. Cx-SAM synthase family.</text>
</comment>
<dbReference type="EC" id="2.1.3.-" evidence="1"/>
<dbReference type="EMBL" id="CP001144">
    <property type="protein sequence ID" value="ACH76720.1"/>
    <property type="molecule type" value="Genomic_DNA"/>
</dbReference>
<dbReference type="RefSeq" id="WP_000019609.1">
    <property type="nucleotide sequence ID" value="NC_011205.1"/>
</dbReference>
<dbReference type="SMR" id="B5FSM6"/>
<dbReference type="KEGG" id="sed:SeD_A1342"/>
<dbReference type="HOGENOM" id="CLU_078475_0_0_6"/>
<dbReference type="Proteomes" id="UP000008322">
    <property type="component" value="Chromosome"/>
</dbReference>
<dbReference type="GO" id="GO:0016743">
    <property type="term" value="F:carboxyl- or carbamoyltransferase activity"/>
    <property type="evidence" value="ECO:0007669"/>
    <property type="project" value="UniProtKB-UniRule"/>
</dbReference>
<dbReference type="GO" id="GO:1904047">
    <property type="term" value="F:S-adenosyl-L-methionine binding"/>
    <property type="evidence" value="ECO:0007669"/>
    <property type="project" value="UniProtKB-UniRule"/>
</dbReference>
<dbReference type="GO" id="GO:0002098">
    <property type="term" value="P:tRNA wobble uridine modification"/>
    <property type="evidence" value="ECO:0007669"/>
    <property type="project" value="InterPro"/>
</dbReference>
<dbReference type="CDD" id="cd02440">
    <property type="entry name" value="AdoMet_MTases"/>
    <property type="match status" value="1"/>
</dbReference>
<dbReference type="FunFam" id="3.40.50.150:FF:000030">
    <property type="entry name" value="Carboxy-S-adenosyl-L-methionine synthase"/>
    <property type="match status" value="1"/>
</dbReference>
<dbReference type="Gene3D" id="3.40.50.150">
    <property type="entry name" value="Vaccinia Virus protein VP39"/>
    <property type="match status" value="1"/>
</dbReference>
<dbReference type="HAMAP" id="MF_01589">
    <property type="entry name" value="Cx_SAM_synthase"/>
    <property type="match status" value="1"/>
</dbReference>
<dbReference type="InterPro" id="IPR005271">
    <property type="entry name" value="CmoA"/>
</dbReference>
<dbReference type="InterPro" id="IPR041698">
    <property type="entry name" value="Methyltransf_25"/>
</dbReference>
<dbReference type="InterPro" id="IPR029063">
    <property type="entry name" value="SAM-dependent_MTases_sf"/>
</dbReference>
<dbReference type="NCBIfam" id="TIGR00740">
    <property type="entry name" value="carboxy-S-adenosyl-L-methionine synthase CmoA"/>
    <property type="match status" value="1"/>
</dbReference>
<dbReference type="NCBIfam" id="NF011995">
    <property type="entry name" value="PRK15451.1"/>
    <property type="match status" value="1"/>
</dbReference>
<dbReference type="PANTHER" id="PTHR43861:SF2">
    <property type="entry name" value="CARBOXY-S-ADENOSYL-L-METHIONINE SYNTHASE"/>
    <property type="match status" value="1"/>
</dbReference>
<dbReference type="PANTHER" id="PTHR43861">
    <property type="entry name" value="TRANS-ACONITATE 2-METHYLTRANSFERASE-RELATED"/>
    <property type="match status" value="1"/>
</dbReference>
<dbReference type="Pfam" id="PF13649">
    <property type="entry name" value="Methyltransf_25"/>
    <property type="match status" value="1"/>
</dbReference>
<dbReference type="PIRSF" id="PIRSF006325">
    <property type="entry name" value="MeTrfase_bac"/>
    <property type="match status" value="1"/>
</dbReference>
<dbReference type="SUPFAM" id="SSF53335">
    <property type="entry name" value="S-adenosyl-L-methionine-dependent methyltransferases"/>
    <property type="match status" value="1"/>
</dbReference>
<protein>
    <recommendedName>
        <fullName evidence="1">Carboxy-S-adenosyl-L-methionine synthase</fullName>
        <shortName evidence="1">Cx-SAM synthase</shortName>
        <ecNumber evidence="1">2.1.3.-</ecNumber>
    </recommendedName>
</protein>
<proteinExistence type="inferred from homology"/>
<gene>
    <name evidence="1" type="primary">cmoA</name>
    <name type="ordered locus">SeD_A1342</name>
</gene>
<evidence type="ECO:0000255" key="1">
    <source>
        <dbReference type="HAMAP-Rule" id="MF_01589"/>
    </source>
</evidence>
<organism>
    <name type="scientific">Salmonella dublin (strain CT_02021853)</name>
    <dbReference type="NCBI Taxonomy" id="439851"/>
    <lineage>
        <taxon>Bacteria</taxon>
        <taxon>Pseudomonadati</taxon>
        <taxon>Pseudomonadota</taxon>
        <taxon>Gammaproteobacteria</taxon>
        <taxon>Enterobacterales</taxon>
        <taxon>Enterobacteriaceae</taxon>
        <taxon>Salmonella</taxon>
    </lineage>
</organism>
<name>CMOA_SALDC</name>